<name>CMOB_PHOPR</name>
<feature type="chain" id="PRO_0000313940" description="tRNA U34 carboxymethyltransferase">
    <location>
        <begin position="1"/>
        <end position="324"/>
    </location>
</feature>
<feature type="binding site" evidence="1">
    <location>
        <position position="91"/>
    </location>
    <ligand>
        <name>carboxy-S-adenosyl-L-methionine</name>
        <dbReference type="ChEBI" id="CHEBI:134278"/>
    </ligand>
</feature>
<feature type="binding site" evidence="1">
    <location>
        <position position="105"/>
    </location>
    <ligand>
        <name>carboxy-S-adenosyl-L-methionine</name>
        <dbReference type="ChEBI" id="CHEBI:134278"/>
    </ligand>
</feature>
<feature type="binding site" evidence="1">
    <location>
        <position position="110"/>
    </location>
    <ligand>
        <name>carboxy-S-adenosyl-L-methionine</name>
        <dbReference type="ChEBI" id="CHEBI:134278"/>
    </ligand>
</feature>
<feature type="binding site" evidence="1">
    <location>
        <position position="130"/>
    </location>
    <ligand>
        <name>carboxy-S-adenosyl-L-methionine</name>
        <dbReference type="ChEBI" id="CHEBI:134278"/>
    </ligand>
</feature>
<feature type="binding site" evidence="1">
    <location>
        <begin position="152"/>
        <end position="154"/>
    </location>
    <ligand>
        <name>carboxy-S-adenosyl-L-methionine</name>
        <dbReference type="ChEBI" id="CHEBI:134278"/>
    </ligand>
</feature>
<feature type="binding site" evidence="1">
    <location>
        <begin position="181"/>
        <end position="182"/>
    </location>
    <ligand>
        <name>carboxy-S-adenosyl-L-methionine</name>
        <dbReference type="ChEBI" id="CHEBI:134278"/>
    </ligand>
</feature>
<feature type="binding site" evidence="1">
    <location>
        <position position="196"/>
    </location>
    <ligand>
        <name>carboxy-S-adenosyl-L-methionine</name>
        <dbReference type="ChEBI" id="CHEBI:134278"/>
    </ligand>
</feature>
<feature type="binding site" evidence="1">
    <location>
        <position position="200"/>
    </location>
    <ligand>
        <name>carboxy-S-adenosyl-L-methionine</name>
        <dbReference type="ChEBI" id="CHEBI:134278"/>
    </ligand>
</feature>
<feature type="binding site" evidence="1">
    <location>
        <position position="315"/>
    </location>
    <ligand>
        <name>carboxy-S-adenosyl-L-methionine</name>
        <dbReference type="ChEBI" id="CHEBI:134278"/>
    </ligand>
</feature>
<proteinExistence type="inferred from homology"/>
<evidence type="ECO:0000255" key="1">
    <source>
        <dbReference type="HAMAP-Rule" id="MF_01590"/>
    </source>
</evidence>
<gene>
    <name evidence="1" type="primary">cmoB</name>
    <name type="ordered locus">PBPRA1109</name>
</gene>
<accession>Q6LT56</accession>
<organism>
    <name type="scientific">Photobacterium profundum (strain SS9)</name>
    <dbReference type="NCBI Taxonomy" id="298386"/>
    <lineage>
        <taxon>Bacteria</taxon>
        <taxon>Pseudomonadati</taxon>
        <taxon>Pseudomonadota</taxon>
        <taxon>Gammaproteobacteria</taxon>
        <taxon>Vibrionales</taxon>
        <taxon>Vibrionaceae</taxon>
        <taxon>Photobacterium</taxon>
    </lineage>
</organism>
<keyword id="KW-1185">Reference proteome</keyword>
<keyword id="KW-0808">Transferase</keyword>
<keyword id="KW-0819">tRNA processing</keyword>
<reference key="1">
    <citation type="journal article" date="2005" name="Science">
        <title>Life at depth: Photobacterium profundum genome sequence and expression analysis.</title>
        <authorList>
            <person name="Vezzi A."/>
            <person name="Campanaro S."/>
            <person name="D'Angelo M."/>
            <person name="Simonato F."/>
            <person name="Vitulo N."/>
            <person name="Lauro F.M."/>
            <person name="Cestaro A."/>
            <person name="Malacrida G."/>
            <person name="Simionati B."/>
            <person name="Cannata N."/>
            <person name="Romualdi C."/>
            <person name="Bartlett D.H."/>
            <person name="Valle G."/>
        </authorList>
    </citation>
    <scope>NUCLEOTIDE SEQUENCE [LARGE SCALE GENOMIC DNA]</scope>
    <source>
        <strain>ATCC BAA-1253 / SS9</strain>
    </source>
</reference>
<comment type="function">
    <text evidence="1">Catalyzes carboxymethyl transfer from carboxy-S-adenosyl-L-methionine (Cx-SAM) to 5-hydroxyuridine (ho5U) to form 5-carboxymethoxyuridine (cmo5U) at position 34 in tRNAs.</text>
</comment>
<comment type="catalytic activity">
    <reaction evidence="1">
        <text>carboxy-S-adenosyl-L-methionine + 5-hydroxyuridine(34) in tRNA = 5-carboxymethoxyuridine(34) in tRNA + S-adenosyl-L-homocysteine + H(+)</text>
        <dbReference type="Rhea" id="RHEA:52848"/>
        <dbReference type="Rhea" id="RHEA-COMP:13381"/>
        <dbReference type="Rhea" id="RHEA-COMP:13383"/>
        <dbReference type="ChEBI" id="CHEBI:15378"/>
        <dbReference type="ChEBI" id="CHEBI:57856"/>
        <dbReference type="ChEBI" id="CHEBI:134278"/>
        <dbReference type="ChEBI" id="CHEBI:136877"/>
        <dbReference type="ChEBI" id="CHEBI:136879"/>
    </reaction>
</comment>
<comment type="subunit">
    <text evidence="1">Homotetramer.</text>
</comment>
<comment type="similarity">
    <text evidence="1">Belongs to the class I-like SAM-binding methyltransferase superfamily. CmoB family.</text>
</comment>
<dbReference type="EC" id="2.5.1.-" evidence="1"/>
<dbReference type="EMBL" id="CR378666">
    <property type="protein sequence ID" value="CAG19520.1"/>
    <property type="molecule type" value="Genomic_DNA"/>
</dbReference>
<dbReference type="RefSeq" id="WP_011217853.1">
    <property type="nucleotide sequence ID" value="NC_006370.1"/>
</dbReference>
<dbReference type="SMR" id="Q6LT56"/>
<dbReference type="STRING" id="298386.PBPRA1109"/>
<dbReference type="KEGG" id="ppr:PBPRA1109"/>
<dbReference type="eggNOG" id="COG2227">
    <property type="taxonomic scope" value="Bacteria"/>
</dbReference>
<dbReference type="HOGENOM" id="CLU_052665_0_0_6"/>
<dbReference type="Proteomes" id="UP000000593">
    <property type="component" value="Chromosome 1"/>
</dbReference>
<dbReference type="GO" id="GO:0008168">
    <property type="term" value="F:methyltransferase activity"/>
    <property type="evidence" value="ECO:0007669"/>
    <property type="project" value="TreeGrafter"/>
</dbReference>
<dbReference type="GO" id="GO:0016765">
    <property type="term" value="F:transferase activity, transferring alkyl or aryl (other than methyl) groups"/>
    <property type="evidence" value="ECO:0007669"/>
    <property type="project" value="UniProtKB-UniRule"/>
</dbReference>
<dbReference type="GO" id="GO:0002098">
    <property type="term" value="P:tRNA wobble uridine modification"/>
    <property type="evidence" value="ECO:0007669"/>
    <property type="project" value="InterPro"/>
</dbReference>
<dbReference type="CDD" id="cd02440">
    <property type="entry name" value="AdoMet_MTases"/>
    <property type="match status" value="1"/>
</dbReference>
<dbReference type="Gene3D" id="3.40.50.150">
    <property type="entry name" value="Vaccinia Virus protein VP39"/>
    <property type="match status" value="1"/>
</dbReference>
<dbReference type="HAMAP" id="MF_01590">
    <property type="entry name" value="tRNA_carboxymethyltr_CmoB"/>
    <property type="match status" value="1"/>
</dbReference>
<dbReference type="InterPro" id="IPR010017">
    <property type="entry name" value="CmoB"/>
</dbReference>
<dbReference type="InterPro" id="IPR027555">
    <property type="entry name" value="Mo5U34_MeTrfas-like"/>
</dbReference>
<dbReference type="InterPro" id="IPR029063">
    <property type="entry name" value="SAM-dependent_MTases_sf"/>
</dbReference>
<dbReference type="NCBIfam" id="NF011650">
    <property type="entry name" value="PRK15068.1"/>
    <property type="match status" value="1"/>
</dbReference>
<dbReference type="NCBIfam" id="TIGR00452">
    <property type="entry name" value="tRNA 5-methoxyuridine(34)/uridine 5-oxyacetic acid(34) synthase CmoB"/>
    <property type="match status" value="1"/>
</dbReference>
<dbReference type="PANTHER" id="PTHR43464">
    <property type="entry name" value="METHYLTRANSFERASE"/>
    <property type="match status" value="1"/>
</dbReference>
<dbReference type="PANTHER" id="PTHR43464:SF95">
    <property type="entry name" value="TRNA U34 CARBOXYMETHYLTRANSFERASE"/>
    <property type="match status" value="1"/>
</dbReference>
<dbReference type="Pfam" id="PF08003">
    <property type="entry name" value="Methyltransf_9"/>
    <property type="match status" value="1"/>
</dbReference>
<dbReference type="SUPFAM" id="SSF53335">
    <property type="entry name" value="S-adenosyl-L-methionine-dependent methyltransferases"/>
    <property type="match status" value="1"/>
</dbReference>
<sequence length="324" mass="37411">MFSFSEFYKLIAQHETLRPWLNTLPKQLSDWEEAEHGDMGRWIRALKKFPTDKPDIIDIKNEVSVRYEDGIANGEQKRLESLLRLLHPWRKGPYNMHGIHIDTEWRSDWKWDRVLPHISPLQGRSVLDVGCGNGYHMWRMLGEGAALTVGIDPSNLFLIQFEAIRRLMGDDNRAFLLPLGIEQLPELKAFDTVFSMGVLYHRRSPLDHIIQLKNQLRKDGEVILETLVIEGDENAVLVPTGRYAQMHNVYFFPSAKALKVWMEKCGFVDVRIVDESVTTTDEQRSTDWMTNNSLPEYLSPDDPTKTIEGYPAPKRAILVARNPD</sequence>
<protein>
    <recommendedName>
        <fullName evidence="1">tRNA U34 carboxymethyltransferase</fullName>
        <ecNumber evidence="1">2.5.1.-</ecNumber>
    </recommendedName>
</protein>